<comment type="function">
    <text evidence="1">Required for nucleoid occlusion (NO) phenomenon, which prevents Z-ring formation and cell division over the nucleoid. Acts as a DNA-associated cell division inhibitor that binds simultaneously chromosomal DNA and FtsZ, and disrupts the assembly of FtsZ polymers. SlmA-DNA-binding sequences (SBS) are dispersed on non-Ter regions of the chromosome, preventing FtsZ polymerization at these regions.</text>
</comment>
<comment type="subunit">
    <text evidence="1">Homodimer. Interacts with FtsZ.</text>
</comment>
<comment type="subcellular location">
    <subcellularLocation>
        <location evidence="1">Cytoplasm</location>
        <location evidence="1">Nucleoid</location>
    </subcellularLocation>
</comment>
<comment type="similarity">
    <text evidence="1">Belongs to the nucleoid occlusion factor SlmA family.</text>
</comment>
<dbReference type="EMBL" id="AE017220">
    <property type="protein sequence ID" value="AAX67561.1"/>
    <property type="molecule type" value="Genomic_DNA"/>
</dbReference>
<dbReference type="RefSeq" id="WP_000818607.1">
    <property type="nucleotide sequence ID" value="NC_006905.1"/>
</dbReference>
<dbReference type="SMR" id="Q57IA1"/>
<dbReference type="KEGG" id="sec:SCH_3655"/>
<dbReference type="HOGENOM" id="CLU_069356_5_0_6"/>
<dbReference type="Proteomes" id="UP000000538">
    <property type="component" value="Chromosome"/>
</dbReference>
<dbReference type="GO" id="GO:0043590">
    <property type="term" value="C:bacterial nucleoid"/>
    <property type="evidence" value="ECO:0007669"/>
    <property type="project" value="UniProtKB-UniRule"/>
</dbReference>
<dbReference type="GO" id="GO:0005737">
    <property type="term" value="C:cytoplasm"/>
    <property type="evidence" value="ECO:0007669"/>
    <property type="project" value="UniProtKB-UniRule"/>
</dbReference>
<dbReference type="GO" id="GO:0003700">
    <property type="term" value="F:DNA-binding transcription factor activity"/>
    <property type="evidence" value="ECO:0007669"/>
    <property type="project" value="TreeGrafter"/>
</dbReference>
<dbReference type="GO" id="GO:0000976">
    <property type="term" value="F:transcription cis-regulatory region binding"/>
    <property type="evidence" value="ECO:0007669"/>
    <property type="project" value="TreeGrafter"/>
</dbReference>
<dbReference type="GO" id="GO:0051301">
    <property type="term" value="P:cell division"/>
    <property type="evidence" value="ECO:0007669"/>
    <property type="project" value="UniProtKB-KW"/>
</dbReference>
<dbReference type="GO" id="GO:0010974">
    <property type="term" value="P:negative regulation of division septum assembly"/>
    <property type="evidence" value="ECO:0007669"/>
    <property type="project" value="InterPro"/>
</dbReference>
<dbReference type="FunFam" id="1.10.357.10:FF:000002">
    <property type="entry name" value="Nucleoid occlusion factor SlmA"/>
    <property type="match status" value="1"/>
</dbReference>
<dbReference type="Gene3D" id="1.10.357.10">
    <property type="entry name" value="Tetracycline Repressor, domain 2"/>
    <property type="match status" value="1"/>
</dbReference>
<dbReference type="HAMAP" id="MF_01839">
    <property type="entry name" value="NO_factor_SlmA"/>
    <property type="match status" value="1"/>
</dbReference>
<dbReference type="InterPro" id="IPR023772">
    <property type="entry name" value="DNA-bd_HTH_TetR-type_CS"/>
</dbReference>
<dbReference type="InterPro" id="IPR009057">
    <property type="entry name" value="Homeodomain-like_sf"/>
</dbReference>
<dbReference type="InterPro" id="IPR050109">
    <property type="entry name" value="HTH-type_TetR-like_transc_reg"/>
</dbReference>
<dbReference type="InterPro" id="IPR001647">
    <property type="entry name" value="HTH_TetR"/>
</dbReference>
<dbReference type="InterPro" id="IPR023769">
    <property type="entry name" value="NO_SlmA"/>
</dbReference>
<dbReference type="InterPro" id="IPR054580">
    <property type="entry name" value="SlmA-like_C"/>
</dbReference>
<dbReference type="InterPro" id="IPR036271">
    <property type="entry name" value="Tet_transcr_reg_TetR-rel_C_sf"/>
</dbReference>
<dbReference type="NCBIfam" id="NF007015">
    <property type="entry name" value="PRK09480.1"/>
    <property type="match status" value="1"/>
</dbReference>
<dbReference type="PANTHER" id="PTHR30055">
    <property type="entry name" value="HTH-TYPE TRANSCRIPTIONAL REGULATOR RUTR"/>
    <property type="match status" value="1"/>
</dbReference>
<dbReference type="PANTHER" id="PTHR30055:SF183">
    <property type="entry name" value="NUCLEOID OCCLUSION FACTOR SLMA"/>
    <property type="match status" value="1"/>
</dbReference>
<dbReference type="Pfam" id="PF22276">
    <property type="entry name" value="SlmA-like_C"/>
    <property type="match status" value="1"/>
</dbReference>
<dbReference type="Pfam" id="PF00440">
    <property type="entry name" value="TetR_N"/>
    <property type="match status" value="1"/>
</dbReference>
<dbReference type="SUPFAM" id="SSF46689">
    <property type="entry name" value="Homeodomain-like"/>
    <property type="match status" value="1"/>
</dbReference>
<dbReference type="SUPFAM" id="SSF48498">
    <property type="entry name" value="Tetracyclin repressor-like, C-terminal domain"/>
    <property type="match status" value="1"/>
</dbReference>
<dbReference type="PROSITE" id="PS01081">
    <property type="entry name" value="HTH_TETR_1"/>
    <property type="match status" value="1"/>
</dbReference>
<dbReference type="PROSITE" id="PS50977">
    <property type="entry name" value="HTH_TETR_2"/>
    <property type="match status" value="1"/>
</dbReference>
<organism>
    <name type="scientific">Salmonella choleraesuis (strain SC-B67)</name>
    <dbReference type="NCBI Taxonomy" id="321314"/>
    <lineage>
        <taxon>Bacteria</taxon>
        <taxon>Pseudomonadati</taxon>
        <taxon>Pseudomonadota</taxon>
        <taxon>Gammaproteobacteria</taxon>
        <taxon>Enterobacterales</taxon>
        <taxon>Enterobacteriaceae</taxon>
        <taxon>Salmonella</taxon>
    </lineage>
</organism>
<accession>Q57IA1</accession>
<gene>
    <name evidence="1" type="primary">slmA</name>
    <name type="ordered locus">SCH_3655</name>
</gene>
<keyword id="KW-0131">Cell cycle</keyword>
<keyword id="KW-0132">Cell division</keyword>
<keyword id="KW-0175">Coiled coil</keyword>
<keyword id="KW-0963">Cytoplasm</keyword>
<keyword id="KW-0238">DNA-binding</keyword>
<name>SLMA_SALCH</name>
<proteinExistence type="inferred from homology"/>
<sequence>MAEKQTAKRNRREEILQSLALMLESSDGSQRITTAKLAASVGVSEAALYRHFPSKTRMFDSLIEFIEDSLITRINLILKDEKNTSTRLRLIVLLILGFGERNPGLTRILTGHALMFEQDRLQGRINQLFERIEAQLRQVLREKRMREGEGYTTDENLLASQLLAFCEGMLSRFVRSEFKYRPTDDFDARWPLIAAQLQ</sequence>
<protein>
    <recommendedName>
        <fullName evidence="1">Nucleoid occlusion factor SlmA</fullName>
    </recommendedName>
</protein>
<reference key="1">
    <citation type="journal article" date="2005" name="Nucleic Acids Res.">
        <title>The genome sequence of Salmonella enterica serovar Choleraesuis, a highly invasive and resistant zoonotic pathogen.</title>
        <authorList>
            <person name="Chiu C.-H."/>
            <person name="Tang P."/>
            <person name="Chu C."/>
            <person name="Hu S."/>
            <person name="Bao Q."/>
            <person name="Yu J."/>
            <person name="Chou Y.-Y."/>
            <person name="Wang H.-S."/>
            <person name="Lee Y.-S."/>
        </authorList>
    </citation>
    <scope>NUCLEOTIDE SEQUENCE [LARGE SCALE GENOMIC DNA]</scope>
    <source>
        <strain>SC-B67</strain>
    </source>
</reference>
<evidence type="ECO:0000255" key="1">
    <source>
        <dbReference type="HAMAP-Rule" id="MF_01839"/>
    </source>
</evidence>
<feature type="chain" id="PRO_0000198977" description="Nucleoid occlusion factor SlmA">
    <location>
        <begin position="1"/>
        <end position="198"/>
    </location>
</feature>
<feature type="domain" description="HTH tetR-type" evidence="1">
    <location>
        <begin position="10"/>
        <end position="70"/>
    </location>
</feature>
<feature type="DNA-binding region" description="H-T-H motif" evidence="1">
    <location>
        <begin position="33"/>
        <end position="52"/>
    </location>
</feature>
<feature type="coiled-coil region" evidence="1">
    <location>
        <begin position="117"/>
        <end position="144"/>
    </location>
</feature>